<organism>
    <name type="scientific">Human papillomavirus 57</name>
    <dbReference type="NCBI Taxonomy" id="333753"/>
    <lineage>
        <taxon>Viruses</taxon>
        <taxon>Monodnaviria</taxon>
        <taxon>Shotokuvirae</taxon>
        <taxon>Cossaviricota</taxon>
        <taxon>Papovaviricetes</taxon>
        <taxon>Zurhausenvirales</taxon>
        <taxon>Papillomaviridae</taxon>
        <taxon>Firstpapillomavirinae</taxon>
        <taxon>Alphapapillomavirus</taxon>
        <taxon>Alphapapillomavirus 4</taxon>
    </lineage>
</organism>
<gene>
    <name evidence="1" type="primary">E1</name>
</gene>
<name>VE1_HPV57</name>
<accession>P22153</accession>
<comment type="function">
    <text evidence="1">ATP-dependent DNA 3'-5' helicase required for initiation of viral DNA replication. It forms a complex with the viral E2 protein. The E1-E2 complex binds to the replication origin which contains binding sites for both proteins. During the initial step, a dimer of E1 interacts with a dimer of protein E2 leading to a complex that binds the viral origin of replication with high specificity. Then, a second dimer of E1 displaces the E2 dimer in an ATP-dependent manner to form the E1 tetramer. Following this, two E1 monomers are added to each half of the site, which results in the formation of two E1 trimers on the viral ori. Subsequently, two hexamers will be created. The double hexamer acts as a bi-directional helicase machinery and unwinds the viral DNA and then recruits the host DNA polymerase to start replication.</text>
</comment>
<comment type="catalytic activity">
    <reaction evidence="1">
        <text>Couples ATP hydrolysis with the unwinding of duplex DNA by translocating in the 3'-5' direction.</text>
        <dbReference type="EC" id="5.6.2.4"/>
    </reaction>
</comment>
<comment type="catalytic activity">
    <reaction evidence="1">
        <text>ATP + H2O = ADP + phosphate + H(+)</text>
        <dbReference type="Rhea" id="RHEA:13065"/>
        <dbReference type="ChEBI" id="CHEBI:15377"/>
        <dbReference type="ChEBI" id="CHEBI:15378"/>
        <dbReference type="ChEBI" id="CHEBI:30616"/>
        <dbReference type="ChEBI" id="CHEBI:43474"/>
        <dbReference type="ChEBI" id="CHEBI:456216"/>
        <dbReference type="EC" id="5.6.2.4"/>
    </reaction>
</comment>
<comment type="subunit">
    <text evidence="1">Can form hexamers. Interacts with E2 protein; this interaction increases E1 DNA binding specificity. Interacts with host DNA polymerase subunit POLA2. Interacts with host single stranded DNA-binding protein RPA1. Interacts with host TOP1; this interaction stimulates the enzymatic activity of TOP1.</text>
</comment>
<comment type="subcellular location">
    <subcellularLocation>
        <location evidence="1">Host nucleus</location>
    </subcellularLocation>
</comment>
<comment type="PTM">
    <text evidence="1">Phosphorylated.</text>
</comment>
<comment type="PTM">
    <text evidence="1">Sumoylated.</text>
</comment>
<comment type="similarity">
    <text evidence="1">Belongs to the papillomaviridae E1 protein family.</text>
</comment>
<proteinExistence type="inferred from homology"/>
<sequence length="643" mass="72479">MEDSEGTDGTDEDGCRAGGWFHVEAIITHGQSQVSSDEDEDETETREDLDFIDNRVPGDGQEVPLQLYAQQIAQDDEATVQALKRKFVASPLSACSCIENDLSPRLDAISLNRKSEKAKRRLFETEPPDSGYGNTQMVVGTPEEVTGEDNSQGGRPVDVREEERQGGDGEADLTVHTPQSGTDAAGSVLTLLKSSNLKATLLSKFKELYGVGYYELVRQFKSSRTACADWVVCAFRVYYAVAEGIKQLIQPHTQYAHIQIQTSSWGMVVFMLLRYNCAKNRDTVSKNMSMLLNIPEKHMLIEPPKLRSTPAALYWYKTSMGNGSEVYGETPEWIVRQTLIGHSMEDEQFKLSVMVQYAYDHDITDESALAFEYAQLADVDANAAAFLNSNCQAKYLKDAVTMCRHYKRAEREQMSMSQWITFRGSKISEEGDWKPIVKFLRHQGVEFVSFLAAFKSFLKGVPKKNCIVFYGPADTGKSYFCMSLLQFLGGAVISYANSSSHFWLQPLADSKIGLLDDATAQCWTYIDTYLRNLLDGNPFSIDRKHKTLLQIKCPPLMITTNINPLEEDRWKYLRSRVTLFKFTNPFPFASPGEPLYPINNANWKCFFQRSWSRLDLNSPEDQEDNGNTGEPFRCVPGDVARTV</sequence>
<organismHost>
    <name type="scientific">Homo sapiens</name>
    <name type="common">Human</name>
    <dbReference type="NCBI Taxonomy" id="9606"/>
</organismHost>
<feature type="chain" id="PRO_0000133150" description="Replication protein E1">
    <location>
        <begin position="1"/>
        <end position="643"/>
    </location>
</feature>
<feature type="domain" description="SF3 helicase" evidence="1">
    <location>
        <begin position="445"/>
        <end position="595"/>
    </location>
</feature>
<feature type="region of interest" description="Disordered" evidence="2">
    <location>
        <begin position="28"/>
        <end position="60"/>
    </location>
</feature>
<feature type="region of interest" description="Disordered" evidence="2">
    <location>
        <begin position="119"/>
        <end position="179"/>
    </location>
</feature>
<feature type="region of interest" description="DNA-binding region" evidence="1">
    <location>
        <begin position="180"/>
        <end position="346"/>
    </location>
</feature>
<feature type="short sequence motif" description="Nuclear localization signal" evidence="1">
    <location>
        <begin position="84"/>
        <end position="86"/>
    </location>
</feature>
<feature type="short sequence motif" description="Nuclear export signal" evidence="1">
    <location>
        <begin position="102"/>
        <end position="111"/>
    </location>
</feature>
<feature type="compositionally biased region" description="Acidic residues" evidence="2">
    <location>
        <begin position="36"/>
        <end position="45"/>
    </location>
</feature>
<feature type="compositionally biased region" description="Basic and acidic residues" evidence="2">
    <location>
        <begin position="157"/>
        <end position="167"/>
    </location>
</feature>
<feature type="binding site" evidence="1">
    <location>
        <begin position="471"/>
        <end position="478"/>
    </location>
    <ligand>
        <name>ATP</name>
        <dbReference type="ChEBI" id="CHEBI:30616"/>
    </ligand>
</feature>
<feature type="modified residue" description="Phosphoserine; by host" evidence="1">
    <location>
        <position position="90"/>
    </location>
</feature>
<feature type="modified residue" description="Phosphoserine; by host" evidence="1">
    <location>
        <position position="103"/>
    </location>
</feature>
<feature type="cross-link" description="Glycyl lysine isopeptide (Lys-Gly) (interchain with G-Cter in SUMO)" evidence="1">
    <location>
        <position position="552"/>
    </location>
</feature>
<evidence type="ECO:0000255" key="1">
    <source>
        <dbReference type="HAMAP-Rule" id="MF_04000"/>
    </source>
</evidence>
<evidence type="ECO:0000256" key="2">
    <source>
        <dbReference type="SAM" id="MobiDB-lite"/>
    </source>
</evidence>
<dbReference type="EC" id="5.6.2.4" evidence="1"/>
<dbReference type="EMBL" id="X55965">
    <property type="protein sequence ID" value="CAA39432.1"/>
    <property type="molecule type" value="Genomic_DNA"/>
</dbReference>
<dbReference type="PIR" id="S15623">
    <property type="entry name" value="S15623"/>
</dbReference>
<dbReference type="SMR" id="P22153"/>
<dbReference type="Proteomes" id="UP000007667">
    <property type="component" value="Genome"/>
</dbReference>
<dbReference type="GO" id="GO:0042025">
    <property type="term" value="C:host cell nucleus"/>
    <property type="evidence" value="ECO:0007669"/>
    <property type="project" value="UniProtKB-SubCell"/>
</dbReference>
<dbReference type="GO" id="GO:0005524">
    <property type="term" value="F:ATP binding"/>
    <property type="evidence" value="ECO:0007669"/>
    <property type="project" value="UniProtKB-UniRule"/>
</dbReference>
<dbReference type="GO" id="GO:0016887">
    <property type="term" value="F:ATP hydrolysis activity"/>
    <property type="evidence" value="ECO:0007669"/>
    <property type="project" value="RHEA"/>
</dbReference>
<dbReference type="GO" id="GO:0003677">
    <property type="term" value="F:DNA binding"/>
    <property type="evidence" value="ECO:0007669"/>
    <property type="project" value="UniProtKB-UniRule"/>
</dbReference>
<dbReference type="GO" id="GO:0003678">
    <property type="term" value="F:DNA helicase activity"/>
    <property type="evidence" value="ECO:0007669"/>
    <property type="project" value="UniProtKB-UniRule"/>
</dbReference>
<dbReference type="GO" id="GO:0006260">
    <property type="term" value="P:DNA replication"/>
    <property type="evidence" value="ECO:0007669"/>
    <property type="project" value="UniProtKB-UniRule"/>
</dbReference>
<dbReference type="Gene3D" id="3.40.1310.10">
    <property type="match status" value="1"/>
</dbReference>
<dbReference type="Gene3D" id="3.40.50.300">
    <property type="entry name" value="P-loop containing nucleotide triphosphate hydrolases"/>
    <property type="match status" value="1"/>
</dbReference>
<dbReference type="Gene3D" id="1.10.10.510">
    <property type="entry name" value="Zinc finger, large T-antigen D1 domain"/>
    <property type="match status" value="1"/>
</dbReference>
<dbReference type="HAMAP" id="MF_04000">
    <property type="entry name" value="PPV_E1"/>
    <property type="match status" value="1"/>
</dbReference>
<dbReference type="InterPro" id="IPR014015">
    <property type="entry name" value="Helicase_SF3_DNA-vir"/>
</dbReference>
<dbReference type="InterPro" id="IPR027417">
    <property type="entry name" value="P-loop_NTPase"/>
</dbReference>
<dbReference type="InterPro" id="IPR001177">
    <property type="entry name" value="PPV_DNA_helicase_E1_C"/>
</dbReference>
<dbReference type="InterPro" id="IPR014000">
    <property type="entry name" value="PPV_DNA_helicase_E1_N"/>
</dbReference>
<dbReference type="InterPro" id="IPR046832">
    <property type="entry name" value="PPV_E1_DBD"/>
</dbReference>
<dbReference type="InterPro" id="IPR046935">
    <property type="entry name" value="PPV_E1_DBD_sf"/>
</dbReference>
<dbReference type="InterPro" id="IPR016393">
    <property type="entry name" value="Rep_E1_papillomaV"/>
</dbReference>
<dbReference type="InterPro" id="IPR037102">
    <property type="entry name" value="Znf_lg_T-Ag_D1_dom_sf"/>
</dbReference>
<dbReference type="Pfam" id="PF00519">
    <property type="entry name" value="PPV_E1_C"/>
    <property type="match status" value="1"/>
</dbReference>
<dbReference type="Pfam" id="PF20450">
    <property type="entry name" value="PPV_E1_DBD"/>
    <property type="match status" value="1"/>
</dbReference>
<dbReference type="Pfam" id="PF00524">
    <property type="entry name" value="PPV_E1_N"/>
    <property type="match status" value="1"/>
</dbReference>
<dbReference type="PIRSF" id="PIRSF003383">
    <property type="entry name" value="Rep_E1_papillomaV"/>
    <property type="match status" value="1"/>
</dbReference>
<dbReference type="SUPFAM" id="SSF55464">
    <property type="entry name" value="Origin of replication-binding domain, RBD-like"/>
    <property type="match status" value="1"/>
</dbReference>
<dbReference type="SUPFAM" id="SSF52540">
    <property type="entry name" value="P-loop containing nucleoside triphosphate hydrolases"/>
    <property type="match status" value="1"/>
</dbReference>
<dbReference type="PROSITE" id="PS51206">
    <property type="entry name" value="SF3_HELICASE_1"/>
    <property type="match status" value="1"/>
</dbReference>
<reference key="1">
    <citation type="journal article" date="1990" name="Virus Res.">
        <title>A comparative sequence analysis of two human papillomavirus (HPV) types 2a and 57.</title>
        <authorList>
            <person name="Hirsch-Behnam A."/>
            <person name="Delius H."/>
            <person name="de Villiers E.M."/>
        </authorList>
    </citation>
    <scope>NUCLEOTIDE SEQUENCE [GENOMIC DNA]</scope>
</reference>
<keyword id="KW-0067">ATP-binding</keyword>
<keyword id="KW-0235">DNA replication</keyword>
<keyword id="KW-0238">DNA-binding</keyword>
<keyword id="KW-0244">Early protein</keyword>
<keyword id="KW-0347">Helicase</keyword>
<keyword id="KW-1048">Host nucleus</keyword>
<keyword id="KW-0378">Hydrolase</keyword>
<keyword id="KW-0413">Isomerase</keyword>
<keyword id="KW-1017">Isopeptide bond</keyword>
<keyword id="KW-0547">Nucleotide-binding</keyword>
<keyword id="KW-0597">Phosphoprotein</keyword>
<keyword id="KW-0832">Ubl conjugation</keyword>
<protein>
    <recommendedName>
        <fullName evidence="1">Replication protein E1</fullName>
        <ecNumber evidence="1">5.6.2.4</ecNumber>
    </recommendedName>
    <alternativeName>
        <fullName evidence="1">ATP-dependent helicase E1</fullName>
    </alternativeName>
    <alternativeName>
        <fullName evidence="1">DNA 3'-5' helicase E1</fullName>
    </alternativeName>
</protein>